<accession>B2SJZ7</accession>
<organism>
    <name type="scientific">Xanthomonas oryzae pv. oryzae (strain PXO99A)</name>
    <dbReference type="NCBI Taxonomy" id="360094"/>
    <lineage>
        <taxon>Bacteria</taxon>
        <taxon>Pseudomonadati</taxon>
        <taxon>Pseudomonadota</taxon>
        <taxon>Gammaproteobacteria</taxon>
        <taxon>Lysobacterales</taxon>
        <taxon>Lysobacteraceae</taxon>
        <taxon>Xanthomonas</taxon>
    </lineage>
</organism>
<protein>
    <recommendedName>
        <fullName evidence="1">HPr kinase/phosphorylase</fullName>
        <shortName evidence="1">HPrK/P</shortName>
        <ecNumber evidence="1">2.7.11.-</ecNumber>
        <ecNumber evidence="1">2.7.4.-</ecNumber>
    </recommendedName>
    <alternativeName>
        <fullName evidence="1">HPr(Ser) kinase/phosphorylase</fullName>
    </alternativeName>
</protein>
<proteinExistence type="inferred from homology"/>
<dbReference type="EC" id="2.7.11.-" evidence="1"/>
<dbReference type="EC" id="2.7.4.-" evidence="1"/>
<dbReference type="EMBL" id="CP000967">
    <property type="protein sequence ID" value="ACD60514.1"/>
    <property type="molecule type" value="Genomic_DNA"/>
</dbReference>
<dbReference type="RefSeq" id="WP_011258100.1">
    <property type="nucleotide sequence ID" value="NC_010717.2"/>
</dbReference>
<dbReference type="SMR" id="B2SJZ7"/>
<dbReference type="KEGG" id="xop:PXO_02224"/>
<dbReference type="eggNOG" id="COG1493">
    <property type="taxonomic scope" value="Bacteria"/>
</dbReference>
<dbReference type="HOGENOM" id="CLU_052030_0_2_6"/>
<dbReference type="Proteomes" id="UP000001740">
    <property type="component" value="Chromosome"/>
</dbReference>
<dbReference type="GO" id="GO:0005524">
    <property type="term" value="F:ATP binding"/>
    <property type="evidence" value="ECO:0007669"/>
    <property type="project" value="UniProtKB-UniRule"/>
</dbReference>
<dbReference type="GO" id="GO:0000287">
    <property type="term" value="F:magnesium ion binding"/>
    <property type="evidence" value="ECO:0007669"/>
    <property type="project" value="UniProtKB-UniRule"/>
</dbReference>
<dbReference type="GO" id="GO:0000155">
    <property type="term" value="F:phosphorelay sensor kinase activity"/>
    <property type="evidence" value="ECO:0007669"/>
    <property type="project" value="InterPro"/>
</dbReference>
<dbReference type="GO" id="GO:0004674">
    <property type="term" value="F:protein serine/threonine kinase activity"/>
    <property type="evidence" value="ECO:0007669"/>
    <property type="project" value="UniProtKB-KW"/>
</dbReference>
<dbReference type="GO" id="GO:0004712">
    <property type="term" value="F:protein serine/threonine/tyrosine kinase activity"/>
    <property type="evidence" value="ECO:0007669"/>
    <property type="project" value="UniProtKB-UniRule"/>
</dbReference>
<dbReference type="GO" id="GO:0006109">
    <property type="term" value="P:regulation of carbohydrate metabolic process"/>
    <property type="evidence" value="ECO:0007669"/>
    <property type="project" value="UniProtKB-UniRule"/>
</dbReference>
<dbReference type="CDD" id="cd01918">
    <property type="entry name" value="HprK_C"/>
    <property type="match status" value="1"/>
</dbReference>
<dbReference type="FunFam" id="3.40.50.300:FF:000174">
    <property type="entry name" value="HPr kinase/phosphorylase"/>
    <property type="match status" value="1"/>
</dbReference>
<dbReference type="Gene3D" id="3.40.1390.20">
    <property type="entry name" value="HprK N-terminal domain-like"/>
    <property type="match status" value="1"/>
</dbReference>
<dbReference type="Gene3D" id="3.40.50.300">
    <property type="entry name" value="P-loop containing nucleotide triphosphate hydrolases"/>
    <property type="match status" value="1"/>
</dbReference>
<dbReference type="HAMAP" id="MF_01249">
    <property type="entry name" value="HPr_kinase"/>
    <property type="match status" value="1"/>
</dbReference>
<dbReference type="InterPro" id="IPR003755">
    <property type="entry name" value="HPr(Ser)_kin/Pase"/>
</dbReference>
<dbReference type="InterPro" id="IPR011104">
    <property type="entry name" value="Hpr_kin/Pase_C"/>
</dbReference>
<dbReference type="InterPro" id="IPR011126">
    <property type="entry name" value="Hpr_kin/Pase_Hpr_N"/>
</dbReference>
<dbReference type="InterPro" id="IPR027417">
    <property type="entry name" value="P-loop_NTPase"/>
</dbReference>
<dbReference type="InterPro" id="IPR028979">
    <property type="entry name" value="Ser_kin/Pase_Hpr-like_N_sf"/>
</dbReference>
<dbReference type="NCBIfam" id="TIGR00679">
    <property type="entry name" value="hpr-ser"/>
    <property type="match status" value="1"/>
</dbReference>
<dbReference type="PANTHER" id="PTHR30305:SF1">
    <property type="entry name" value="HPR KINASE_PHOSPHORYLASE"/>
    <property type="match status" value="1"/>
</dbReference>
<dbReference type="PANTHER" id="PTHR30305">
    <property type="entry name" value="PROTEIN YJDM-RELATED"/>
    <property type="match status" value="1"/>
</dbReference>
<dbReference type="Pfam" id="PF07475">
    <property type="entry name" value="Hpr_kinase_C"/>
    <property type="match status" value="1"/>
</dbReference>
<dbReference type="Pfam" id="PF02603">
    <property type="entry name" value="Hpr_kinase_N"/>
    <property type="match status" value="1"/>
</dbReference>
<dbReference type="SUPFAM" id="SSF75138">
    <property type="entry name" value="HprK N-terminal domain-like"/>
    <property type="match status" value="1"/>
</dbReference>
<dbReference type="SUPFAM" id="SSF53795">
    <property type="entry name" value="PEP carboxykinase-like"/>
    <property type="match status" value="1"/>
</dbReference>
<name>HPRK_XANOP</name>
<feature type="chain" id="PRO_1000139919" description="HPr kinase/phosphorylase">
    <location>
        <begin position="1"/>
        <end position="316"/>
    </location>
</feature>
<feature type="region of interest" description="Important for the catalytic mechanism of both phosphorylation and dephosphorylation" evidence="1">
    <location>
        <begin position="206"/>
        <end position="215"/>
    </location>
</feature>
<feature type="region of interest" description="Important for the catalytic mechanism of dephosphorylation" evidence="1">
    <location>
        <begin position="272"/>
        <end position="277"/>
    </location>
</feature>
<feature type="active site" evidence="1">
    <location>
        <position position="143"/>
    </location>
</feature>
<feature type="active site" evidence="1">
    <location>
        <position position="164"/>
    </location>
</feature>
<feature type="active site" description="Proton acceptor; for phosphorylation activity. Proton donor; for dephosphorylation activity" evidence="1">
    <location>
        <position position="182"/>
    </location>
</feature>
<feature type="active site" evidence="1">
    <location>
        <position position="251"/>
    </location>
</feature>
<feature type="binding site" evidence="1">
    <location>
        <begin position="158"/>
        <end position="165"/>
    </location>
    <ligand>
        <name>ATP</name>
        <dbReference type="ChEBI" id="CHEBI:30616"/>
    </ligand>
</feature>
<feature type="binding site" evidence="1">
    <location>
        <position position="165"/>
    </location>
    <ligand>
        <name>Mg(2+)</name>
        <dbReference type="ChEBI" id="CHEBI:18420"/>
    </ligand>
</feature>
<feature type="binding site" evidence="1">
    <location>
        <position position="207"/>
    </location>
    <ligand>
        <name>Mg(2+)</name>
        <dbReference type="ChEBI" id="CHEBI:18420"/>
    </ligand>
</feature>
<comment type="function">
    <text evidence="1">Catalyzes the ATP- as well as the pyrophosphate-dependent phosphorylation of a specific serine residue in HPr, a phosphocarrier protein of the phosphoenolpyruvate-dependent sugar phosphotransferase system (PTS). HprK/P also catalyzes the pyrophosphate-producing, inorganic phosphate-dependent dephosphorylation (phosphorolysis) of seryl-phosphorylated HPr (P-Ser-HPr).</text>
</comment>
<comment type="catalytic activity">
    <reaction evidence="1">
        <text>[HPr protein]-L-serine + ATP = [HPr protein]-O-phospho-L-serine + ADP + H(+)</text>
        <dbReference type="Rhea" id="RHEA:46600"/>
        <dbReference type="Rhea" id="RHEA-COMP:11602"/>
        <dbReference type="Rhea" id="RHEA-COMP:11603"/>
        <dbReference type="ChEBI" id="CHEBI:15378"/>
        <dbReference type="ChEBI" id="CHEBI:29999"/>
        <dbReference type="ChEBI" id="CHEBI:30616"/>
        <dbReference type="ChEBI" id="CHEBI:83421"/>
        <dbReference type="ChEBI" id="CHEBI:456216"/>
    </reaction>
</comment>
<comment type="catalytic activity">
    <reaction evidence="1">
        <text>[HPr protein]-O-phospho-L-serine + phosphate + H(+) = [HPr protein]-L-serine + diphosphate</text>
        <dbReference type="Rhea" id="RHEA:46604"/>
        <dbReference type="Rhea" id="RHEA-COMP:11602"/>
        <dbReference type="Rhea" id="RHEA-COMP:11603"/>
        <dbReference type="ChEBI" id="CHEBI:15378"/>
        <dbReference type="ChEBI" id="CHEBI:29999"/>
        <dbReference type="ChEBI" id="CHEBI:33019"/>
        <dbReference type="ChEBI" id="CHEBI:43474"/>
        <dbReference type="ChEBI" id="CHEBI:83421"/>
    </reaction>
</comment>
<comment type="cofactor">
    <cofactor evidence="1">
        <name>Mg(2+)</name>
        <dbReference type="ChEBI" id="CHEBI:18420"/>
    </cofactor>
</comment>
<comment type="subunit">
    <text evidence="1">Homohexamer.</text>
</comment>
<comment type="domain">
    <text evidence="1">The Walker A ATP-binding motif also binds Pi and PPi.</text>
</comment>
<comment type="miscellaneous">
    <text evidence="1">Both phosphorylation and phosphorolysis are carried out by the same active site and suggest a common mechanism for both reactions.</text>
</comment>
<comment type="similarity">
    <text evidence="1">Belongs to the HPrK/P family.</text>
</comment>
<gene>
    <name evidence="1" type="primary">hprK</name>
    <name type="ordered locus">PXO_02224</name>
</gene>
<evidence type="ECO:0000255" key="1">
    <source>
        <dbReference type="HAMAP-Rule" id="MF_01249"/>
    </source>
</evidence>
<sequence>MNTSITARELFDQQRDKLALRWVAGQKGEHREIQAGSNNARRPSLAGYLNVIYPNKVQILGTEELAWLDSLDARQRWETIEKIIQVQPLALAISKNQSCPEDLGAAADESNTPLWISPKRGHELLNHLSYHLARTLAPRVTLHGVFMEIYSIGVLITGEAGSGKSELALELLSRGHRLVADDAPEFTQIAPDVLDGTCPELLQDLLEVRGLGVLNVRDMFGDTAVKKNKYLRLIVHLTRPMTEPTPSGYERLTGDSGSRHVLDLDVPLITLPVMPGRNLAVLTEAATRLHILRTKGIDPAAMFIARHSNLLERRTP</sequence>
<reference key="1">
    <citation type="journal article" date="2008" name="BMC Genomics">
        <title>Genome sequence and rapid evolution of the rice pathogen Xanthomonas oryzae pv. oryzae PXO99A.</title>
        <authorList>
            <person name="Salzberg S.L."/>
            <person name="Sommer D.D."/>
            <person name="Schatz M.C."/>
            <person name="Phillippy A.M."/>
            <person name="Rabinowicz P.D."/>
            <person name="Tsuge S."/>
            <person name="Furutani A."/>
            <person name="Ochiai H."/>
            <person name="Delcher A.L."/>
            <person name="Kelley D."/>
            <person name="Madupu R."/>
            <person name="Puiu D."/>
            <person name="Radune D."/>
            <person name="Shumway M."/>
            <person name="Trapnell C."/>
            <person name="Aparna G."/>
            <person name="Jha G."/>
            <person name="Pandey A."/>
            <person name="Patil P.B."/>
            <person name="Ishihara H."/>
            <person name="Meyer D.F."/>
            <person name="Szurek B."/>
            <person name="Verdier V."/>
            <person name="Koebnik R."/>
            <person name="Dow J.M."/>
            <person name="Ryan R.P."/>
            <person name="Hirata H."/>
            <person name="Tsuyumu S."/>
            <person name="Won Lee S."/>
            <person name="Seo Y.-S."/>
            <person name="Sriariyanum M."/>
            <person name="Ronald P.C."/>
            <person name="Sonti R.V."/>
            <person name="Van Sluys M.-A."/>
            <person name="Leach J.E."/>
            <person name="White F.F."/>
            <person name="Bogdanove A.J."/>
        </authorList>
    </citation>
    <scope>NUCLEOTIDE SEQUENCE [LARGE SCALE GENOMIC DNA]</scope>
    <source>
        <strain>PXO99A</strain>
    </source>
</reference>
<keyword id="KW-0067">ATP-binding</keyword>
<keyword id="KW-0418">Kinase</keyword>
<keyword id="KW-0460">Magnesium</keyword>
<keyword id="KW-0479">Metal-binding</keyword>
<keyword id="KW-0511">Multifunctional enzyme</keyword>
<keyword id="KW-0547">Nucleotide-binding</keyword>
<keyword id="KW-0723">Serine/threonine-protein kinase</keyword>
<keyword id="KW-0808">Transferase</keyword>